<comment type="function">
    <text evidence="4 5">Probable FAD-dependent enzyme. Involved in regulating post-genital organ fusion. Required to limit cellular interactions between contacting epidermal cells during floral development.</text>
</comment>
<comment type="cofactor">
    <cofactor evidence="1">
        <name>FAD</name>
        <dbReference type="ChEBI" id="CHEBI:57692"/>
    </cofactor>
</comment>
<comment type="alternative products">
    <event type="alternative splicing"/>
    <isoform>
        <id>Q9S746-1</id>
        <name>1</name>
        <sequence type="displayed"/>
    </isoform>
    <text>A number of isoforms are produced. According to EST sequences.</text>
</comment>
<comment type="tissue specificity">
    <text evidence="4">Expressed in roots, leaves, stems, inflorescences and siliques. Found not only in epidermis but also in all sub-epidermal cell layers.</text>
</comment>
<comment type="miscellaneous">
    <text>Mutations in the gene for this protein reveals an unusual pattern of genetic transmission in which progeny plants inherit, at relatively high frequency, DNA sequences different from those carried by their parents. The instability observed is not random but seems to be confined to the restoration of sequence information in progeny plants that, although absent from the parent genome, was present in the genome of an earlier ancestor.</text>
</comment>
<comment type="similarity">
    <text evidence="7">Belongs to the GMC oxidoreductase family.</text>
</comment>
<protein>
    <recommendedName>
        <fullName>Protein HOTHEAD</fullName>
    </recommendedName>
    <alternativeName>
        <fullName>Protein ADHESION OF CALYX EDGES</fullName>
    </alternativeName>
</protein>
<accession>Q9S746</accession>
<accession>Q9SXZ3</accession>
<gene>
    <name type="primary">HTH</name>
    <name type="synonym">ACE</name>
    <name type="ordered locus">At1g72970</name>
    <name type="ORF">F3N23.17</name>
</gene>
<organism>
    <name type="scientific">Arabidopsis thaliana</name>
    <name type="common">Mouse-ear cress</name>
    <dbReference type="NCBI Taxonomy" id="3702"/>
    <lineage>
        <taxon>Eukaryota</taxon>
        <taxon>Viridiplantae</taxon>
        <taxon>Streptophyta</taxon>
        <taxon>Embryophyta</taxon>
        <taxon>Tracheophyta</taxon>
        <taxon>Spermatophyta</taxon>
        <taxon>Magnoliopsida</taxon>
        <taxon>eudicotyledons</taxon>
        <taxon>Gunneridae</taxon>
        <taxon>Pentapetalae</taxon>
        <taxon>rosids</taxon>
        <taxon>malvids</taxon>
        <taxon>Brassicales</taxon>
        <taxon>Brassicaceae</taxon>
        <taxon>Camelineae</taxon>
        <taxon>Arabidopsis</taxon>
    </lineage>
</organism>
<sequence>MALKLFLFALLLCLPTSLSSTASKGKEKKSKFNPYRYTFIDKASTFSSSSSSSFSSNGQDSSYDYIVIGGGTAGCPLAATLSQNFSVLVLERGGVPFTNANVSFLRNFHIGLADISASSASQAFVSTDGVYNARARVLGGGSCINAGFYSRADAAFVKRAGWDPKLVKESYPWVEREIVHQPKLTLWQKALRDSLLEVGVRPFNGFTYDHVSGTKIGGTIFDRFGRRHTAAELLAYANPQKLRVLIYATVQKIVFDTSGTRPRVTGVIFKDEKGNQHQALLSNRKGSEVILSSGAIGSPQMLMLSGIGPKKELQRLKIPVVLENEHVGKGMADNPMNTILVPSKAPIEQSLIQTVGITKMGVYVEASTGFGQSPESIHTHYGIMSNKNELFSTIPAKQRRPEATQAYITRNKYQLHEAFNGSFILEKLAYPISRGHLSLVNTNVDDNPSVTFNYFKHPVDLQRCVEAIRLVSKVVTSNRFLNYTQCDKQNVHKMLSLSVKANINLRPKQLNDTKSMAQFCKDTVVTIWHYHGGCLVGKVVSPNRKVLGVDRLRVIDGSTFDESPGTNPQATMMMMGRYMGVKILRERLGNKAGV</sequence>
<keyword id="KW-0025">Alternative splicing</keyword>
<keyword id="KW-0274">FAD</keyword>
<keyword id="KW-0285">Flavoprotein</keyword>
<keyword id="KW-1185">Reference proteome</keyword>
<keyword id="KW-0732">Signal</keyword>
<name>HTH_ARATH</name>
<reference key="1">
    <citation type="journal article" date="1998" name="Plant Cell Physiol.">
        <title>ADHESION OF CALYX EDGES, a gene involved in the regulation of postgenital fusion in Arabidopsis.</title>
        <authorList>
            <person name="Nakatani-Goto M."/>
            <person name="Araki T."/>
            <person name="Iwabuchi M."/>
        </authorList>
    </citation>
    <scope>NUCLEOTIDE SEQUENCE [MRNA]</scope>
    <scope>VARIANT LYS-478</scope>
    <source>
        <strain>cv. Columbia</strain>
        <strain>cv. No-0</strain>
    </source>
</reference>
<reference key="2">
    <citation type="journal article" date="2003" name="Plant J.">
        <title>Isolation and characterization of the Arabidopsis organ fusion gene HOTHEAD.</title>
        <authorList>
            <person name="Krolikowski K.A."/>
            <person name="Victor J.L."/>
            <person name="Wagler T.N."/>
            <person name="Lolle S.J."/>
            <person name="Pruitt R.E."/>
        </authorList>
    </citation>
    <scope>NUCLEOTIDE SEQUENCE [GENOMIC DNA]</scope>
    <scope>MUTAGENESIS OF GLY-218; ARG-227; GLY-294; GLY-356; GLY-435; PRO-564; GLY-565 AND THR-566</scope>
    <scope>FUNCTION</scope>
    <scope>TISSUE SPECIFICITY</scope>
    <scope>VARIANT LYS-478</scope>
    <source>
        <strain>cv. Columbia</strain>
        <strain>cv. Landsberg erecta</strain>
        <strain>cv. Wassilewskija</strain>
    </source>
</reference>
<reference key="3">
    <citation type="journal article" date="2000" name="Nature">
        <title>Sequence and analysis of chromosome 1 of the plant Arabidopsis thaliana.</title>
        <authorList>
            <person name="Theologis A."/>
            <person name="Ecker J.R."/>
            <person name="Palm C.J."/>
            <person name="Federspiel N.A."/>
            <person name="Kaul S."/>
            <person name="White O."/>
            <person name="Alonso J."/>
            <person name="Altafi H."/>
            <person name="Araujo R."/>
            <person name="Bowman C.L."/>
            <person name="Brooks S.Y."/>
            <person name="Buehler E."/>
            <person name="Chan A."/>
            <person name="Chao Q."/>
            <person name="Chen H."/>
            <person name="Cheuk R.F."/>
            <person name="Chin C.W."/>
            <person name="Chung M.K."/>
            <person name="Conn L."/>
            <person name="Conway A.B."/>
            <person name="Conway A.R."/>
            <person name="Creasy T.H."/>
            <person name="Dewar K."/>
            <person name="Dunn P."/>
            <person name="Etgu P."/>
            <person name="Feldblyum T.V."/>
            <person name="Feng J.-D."/>
            <person name="Fong B."/>
            <person name="Fujii C.Y."/>
            <person name="Gill J.E."/>
            <person name="Goldsmith A.D."/>
            <person name="Haas B."/>
            <person name="Hansen N.F."/>
            <person name="Hughes B."/>
            <person name="Huizar L."/>
            <person name="Hunter J.L."/>
            <person name="Jenkins J."/>
            <person name="Johnson-Hopson C."/>
            <person name="Khan S."/>
            <person name="Khaykin E."/>
            <person name="Kim C.J."/>
            <person name="Koo H.L."/>
            <person name="Kremenetskaia I."/>
            <person name="Kurtz D.B."/>
            <person name="Kwan A."/>
            <person name="Lam B."/>
            <person name="Langin-Hooper S."/>
            <person name="Lee A."/>
            <person name="Lee J.M."/>
            <person name="Lenz C.A."/>
            <person name="Li J.H."/>
            <person name="Li Y.-P."/>
            <person name="Lin X."/>
            <person name="Liu S.X."/>
            <person name="Liu Z.A."/>
            <person name="Luros J.S."/>
            <person name="Maiti R."/>
            <person name="Marziali A."/>
            <person name="Militscher J."/>
            <person name="Miranda M."/>
            <person name="Nguyen M."/>
            <person name="Nierman W.C."/>
            <person name="Osborne B.I."/>
            <person name="Pai G."/>
            <person name="Peterson J."/>
            <person name="Pham P.K."/>
            <person name="Rizzo M."/>
            <person name="Rooney T."/>
            <person name="Rowley D."/>
            <person name="Sakano H."/>
            <person name="Salzberg S.L."/>
            <person name="Schwartz J.R."/>
            <person name="Shinn P."/>
            <person name="Southwick A.M."/>
            <person name="Sun H."/>
            <person name="Tallon L.J."/>
            <person name="Tambunga G."/>
            <person name="Toriumi M.J."/>
            <person name="Town C.D."/>
            <person name="Utterback T."/>
            <person name="Van Aken S."/>
            <person name="Vaysberg M."/>
            <person name="Vysotskaia V.S."/>
            <person name="Walker M."/>
            <person name="Wu D."/>
            <person name="Yu G."/>
            <person name="Fraser C.M."/>
            <person name="Venter J.C."/>
            <person name="Davis R.W."/>
        </authorList>
    </citation>
    <scope>NUCLEOTIDE SEQUENCE [LARGE SCALE GENOMIC DNA]</scope>
    <source>
        <strain>cv. Columbia</strain>
    </source>
</reference>
<reference key="4">
    <citation type="journal article" date="2017" name="Plant J.">
        <title>Araport11: a complete reannotation of the Arabidopsis thaliana reference genome.</title>
        <authorList>
            <person name="Cheng C.Y."/>
            <person name="Krishnakumar V."/>
            <person name="Chan A.P."/>
            <person name="Thibaud-Nissen F."/>
            <person name="Schobel S."/>
            <person name="Town C.D."/>
        </authorList>
    </citation>
    <scope>GENOME REANNOTATION</scope>
    <source>
        <strain>cv. Columbia</strain>
    </source>
</reference>
<reference key="5">
    <citation type="journal article" date="2003" name="Science">
        <title>Empirical analysis of transcriptional activity in the Arabidopsis genome.</title>
        <authorList>
            <person name="Yamada K."/>
            <person name="Lim J."/>
            <person name="Dale J.M."/>
            <person name="Chen H."/>
            <person name="Shinn P."/>
            <person name="Palm C.J."/>
            <person name="Southwick A.M."/>
            <person name="Wu H.C."/>
            <person name="Kim C.J."/>
            <person name="Nguyen M."/>
            <person name="Pham P.K."/>
            <person name="Cheuk R.F."/>
            <person name="Karlin-Newmann G."/>
            <person name="Liu S.X."/>
            <person name="Lam B."/>
            <person name="Sakano H."/>
            <person name="Wu T."/>
            <person name="Yu G."/>
            <person name="Miranda M."/>
            <person name="Quach H.L."/>
            <person name="Tripp M."/>
            <person name="Chang C.H."/>
            <person name="Lee J.M."/>
            <person name="Toriumi M.J."/>
            <person name="Chan M.M."/>
            <person name="Tang C.C."/>
            <person name="Onodera C.S."/>
            <person name="Deng J.M."/>
            <person name="Akiyama K."/>
            <person name="Ansari Y."/>
            <person name="Arakawa T."/>
            <person name="Banh J."/>
            <person name="Banno F."/>
            <person name="Bowser L."/>
            <person name="Brooks S.Y."/>
            <person name="Carninci P."/>
            <person name="Chao Q."/>
            <person name="Choy N."/>
            <person name="Enju A."/>
            <person name="Goldsmith A.D."/>
            <person name="Gurjal M."/>
            <person name="Hansen N.F."/>
            <person name="Hayashizaki Y."/>
            <person name="Johnson-Hopson C."/>
            <person name="Hsuan V.W."/>
            <person name="Iida K."/>
            <person name="Karnes M."/>
            <person name="Khan S."/>
            <person name="Koesema E."/>
            <person name="Ishida J."/>
            <person name="Jiang P.X."/>
            <person name="Jones T."/>
            <person name="Kawai J."/>
            <person name="Kamiya A."/>
            <person name="Meyers C."/>
            <person name="Nakajima M."/>
            <person name="Narusaka M."/>
            <person name="Seki M."/>
            <person name="Sakurai T."/>
            <person name="Satou M."/>
            <person name="Tamse R."/>
            <person name="Vaysberg M."/>
            <person name="Wallender E.K."/>
            <person name="Wong C."/>
            <person name="Yamamura Y."/>
            <person name="Yuan S."/>
            <person name="Shinozaki K."/>
            <person name="Davis R.W."/>
            <person name="Theologis A."/>
            <person name="Ecker J.R."/>
        </authorList>
    </citation>
    <scope>NUCLEOTIDE SEQUENCE [LARGE SCALE MRNA]</scope>
    <source>
        <strain>cv. Columbia</strain>
    </source>
</reference>
<reference key="6">
    <citation type="journal article" date="1998" name="Genetics">
        <title>Genetic analysis of organ fusion in Arabidopsis thaliana.</title>
        <authorList>
            <person name="Lolle S.J."/>
            <person name="Hsu W."/>
            <person name="Pruitt R.E."/>
        </authorList>
    </citation>
    <scope>MUTANTS HTH-2; HTH-3; HTH-4; HTH-5; HTH-6; HTH-7; HTH-8; HTH-10 AND HTH-11</scope>
</reference>
<reference key="7">
    <citation type="journal article" date="2005" name="Nature">
        <title>Genome-wide non-Mendelian inheritance of extra-genomic information in Arabidopsis.</title>
        <authorList>
            <person name="Lolle S.J."/>
            <person name="Victor J.L."/>
            <person name="Young J.M."/>
            <person name="Pruitt R.E."/>
        </authorList>
    </citation>
    <scope>FUNCTION</scope>
</reference>
<feature type="signal peptide" evidence="3">
    <location>
        <begin position="1"/>
        <end position="19"/>
    </location>
</feature>
<feature type="chain" id="PRO_0000012345" description="Protein HOTHEAD">
    <location>
        <begin position="20"/>
        <end position="594"/>
    </location>
</feature>
<feature type="active site" description="Proton acceptor" evidence="2">
    <location>
        <position position="529"/>
    </location>
</feature>
<feature type="binding site" evidence="1">
    <location>
        <begin position="64"/>
        <end position="91"/>
    </location>
    <ligand>
        <name>FAD</name>
        <dbReference type="ChEBI" id="CHEBI:57692"/>
    </ligand>
</feature>
<feature type="sequence variant" description="In strain: cv. No-0 and cv. Wassilewskija." evidence="4 6">
    <original>N</original>
    <variation>K</variation>
    <location>
        <position position="478"/>
    </location>
</feature>
<feature type="mutagenesis site" description="In hth-6; fused organs and increased genetic instability." evidence="4">
    <original>G</original>
    <variation>S</variation>
    <location>
        <position position="218"/>
    </location>
</feature>
<feature type="mutagenesis site" description="In hth-4; fused organs and increased genetic instability." evidence="4">
    <original>R</original>
    <variation>C</variation>
    <location>
        <position position="227"/>
    </location>
</feature>
<feature type="mutagenesis site" description="In hth-2; fused organs and increased genetic instability." evidence="4">
    <original>G</original>
    <variation>E</variation>
    <location>
        <position position="294"/>
    </location>
</feature>
<feature type="mutagenesis site" description="In hth-10; fused organs and increased genetic instability." evidence="4">
    <original>G</original>
    <variation>E</variation>
    <location>
        <position position="356"/>
    </location>
</feature>
<feature type="mutagenesis site" description="In hth-3; fused organs and increased genetic instability." evidence="4">
    <original>G</original>
    <variation>R</variation>
    <location>
        <position position="435"/>
    </location>
</feature>
<feature type="mutagenesis site" description="In hth-5 and hth-11; fused organs and increased genetic instability." evidence="4">
    <original>P</original>
    <variation>S</variation>
    <location>
        <position position="564"/>
    </location>
</feature>
<feature type="mutagenesis site" description="In hth-8; fused organs and increased genetic instability." evidence="4">
    <original>G</original>
    <variation>R</variation>
    <location>
        <position position="565"/>
    </location>
</feature>
<feature type="mutagenesis site" description="In hth-7; fused organs and increased genetic instability." evidence="4">
    <original>T</original>
    <variation>I</variation>
    <location>
        <position position="566"/>
    </location>
</feature>
<dbReference type="EMBL" id="AB027458">
    <property type="protein sequence ID" value="BAA77837.1"/>
    <property type="molecule type" value="mRNA"/>
</dbReference>
<dbReference type="EMBL" id="AB027507">
    <property type="protein sequence ID" value="BAA77842.1"/>
    <property type="molecule type" value="Genomic_DNA"/>
</dbReference>
<dbReference type="EMBL" id="AC008017">
    <property type="protein sequence ID" value="AAD55644.1"/>
    <property type="molecule type" value="Genomic_DNA"/>
</dbReference>
<dbReference type="EMBL" id="CP002684">
    <property type="protein sequence ID" value="AEE35397.1"/>
    <property type="molecule type" value="Genomic_DNA"/>
</dbReference>
<dbReference type="EMBL" id="AY054193">
    <property type="protein sequence ID" value="AAL06854.1"/>
    <property type="molecule type" value="mRNA"/>
</dbReference>
<dbReference type="EMBL" id="BT002648">
    <property type="protein sequence ID" value="AAO11564.1"/>
    <property type="molecule type" value="mRNA"/>
</dbReference>
<dbReference type="PIR" id="T50764">
    <property type="entry name" value="T50764"/>
</dbReference>
<dbReference type="PIR" id="T50765">
    <property type="entry name" value="T50765"/>
</dbReference>
<dbReference type="RefSeq" id="NP_565050.1">
    <molecule id="Q9S746-1"/>
    <property type="nucleotide sequence ID" value="NM_105955.4"/>
</dbReference>
<dbReference type="SMR" id="Q9S746"/>
<dbReference type="FunCoup" id="Q9S746">
    <property type="interactions" value="625"/>
</dbReference>
<dbReference type="STRING" id="3702.Q9S746"/>
<dbReference type="PaxDb" id="3702-AT1G72970.1"/>
<dbReference type="ProteomicsDB" id="232092">
    <molecule id="Q9S746-1"/>
</dbReference>
<dbReference type="EnsemblPlants" id="AT1G72970.1">
    <molecule id="Q9S746-1"/>
    <property type="protein sequence ID" value="AT1G72970.1"/>
    <property type="gene ID" value="AT1G72970"/>
</dbReference>
<dbReference type="GeneID" id="843628"/>
<dbReference type="Gramene" id="AT1G72970.1">
    <molecule id="Q9S746-1"/>
    <property type="protein sequence ID" value="AT1G72970.1"/>
    <property type="gene ID" value="AT1G72970"/>
</dbReference>
<dbReference type="KEGG" id="ath:AT1G72970"/>
<dbReference type="Araport" id="AT1G72970"/>
<dbReference type="TAIR" id="AT1G72970">
    <property type="gene designation" value="HTH"/>
</dbReference>
<dbReference type="eggNOG" id="KOG1238">
    <property type="taxonomic scope" value="Eukaryota"/>
</dbReference>
<dbReference type="InParanoid" id="Q9S746"/>
<dbReference type="OMA" id="NYPWIHI"/>
<dbReference type="OrthoDB" id="269227at2759"/>
<dbReference type="PhylomeDB" id="Q9S746"/>
<dbReference type="BioCyc" id="ARA:AT1G72970-MONOMER"/>
<dbReference type="BioCyc" id="MetaCyc:AT1G72970-MONOMER"/>
<dbReference type="PRO" id="PR:Q9S746"/>
<dbReference type="Proteomes" id="UP000006548">
    <property type="component" value="Chromosome 1"/>
</dbReference>
<dbReference type="ExpressionAtlas" id="Q9S746">
    <property type="expression patterns" value="baseline and differential"/>
</dbReference>
<dbReference type="GO" id="GO:0005576">
    <property type="term" value="C:extracellular region"/>
    <property type="evidence" value="ECO:0000250"/>
    <property type="project" value="TAIR"/>
</dbReference>
<dbReference type="GO" id="GO:0050660">
    <property type="term" value="F:flavin adenine dinucleotide binding"/>
    <property type="evidence" value="ECO:0000250"/>
    <property type="project" value="TAIR"/>
</dbReference>
<dbReference type="GO" id="GO:0046593">
    <property type="term" value="F:mandelonitrile lyase activity"/>
    <property type="evidence" value="ECO:0000250"/>
    <property type="project" value="TAIR"/>
</dbReference>
<dbReference type="GO" id="GO:0016614">
    <property type="term" value="F:oxidoreductase activity, acting on CH-OH group of donors"/>
    <property type="evidence" value="ECO:0007669"/>
    <property type="project" value="InterPro"/>
</dbReference>
<dbReference type="GO" id="GO:0007267">
    <property type="term" value="P:cell-cell signaling"/>
    <property type="evidence" value="ECO:0000315"/>
    <property type="project" value="TAIR"/>
</dbReference>
<dbReference type="GO" id="GO:0009553">
    <property type="term" value="P:embryo sac development"/>
    <property type="evidence" value="ECO:0000315"/>
    <property type="project" value="TAIR"/>
</dbReference>
<dbReference type="GO" id="GO:0010430">
    <property type="term" value="P:fatty acid omega-oxidation"/>
    <property type="evidence" value="ECO:0000315"/>
    <property type="project" value="TAIR"/>
</dbReference>
<dbReference type="Gene3D" id="3.30.410.40">
    <property type="match status" value="1"/>
</dbReference>
<dbReference type="Gene3D" id="3.50.50.60">
    <property type="entry name" value="FAD/NAD(P)-binding domain"/>
    <property type="match status" value="1"/>
</dbReference>
<dbReference type="InterPro" id="IPR036188">
    <property type="entry name" value="FAD/NAD-bd_sf"/>
</dbReference>
<dbReference type="InterPro" id="IPR051871">
    <property type="entry name" value="GMC_Oxidoreductase-Related"/>
</dbReference>
<dbReference type="InterPro" id="IPR012132">
    <property type="entry name" value="GMC_OxRdtase"/>
</dbReference>
<dbReference type="InterPro" id="IPR000172">
    <property type="entry name" value="GMC_OxRdtase_N"/>
</dbReference>
<dbReference type="InterPro" id="IPR007867">
    <property type="entry name" value="GMC_OxRtase_C"/>
</dbReference>
<dbReference type="PANTHER" id="PTHR45968">
    <property type="entry name" value="OSJNBA0019K04.7 PROTEIN"/>
    <property type="match status" value="1"/>
</dbReference>
<dbReference type="PANTHER" id="PTHR45968:SF5">
    <property type="entry name" value="PROTEIN HOTHEAD"/>
    <property type="match status" value="1"/>
</dbReference>
<dbReference type="Pfam" id="PF05199">
    <property type="entry name" value="GMC_oxred_C"/>
    <property type="match status" value="1"/>
</dbReference>
<dbReference type="Pfam" id="PF00732">
    <property type="entry name" value="GMC_oxred_N"/>
    <property type="match status" value="1"/>
</dbReference>
<dbReference type="PIRSF" id="PIRSF000137">
    <property type="entry name" value="Alcohol_oxidase"/>
    <property type="match status" value="1"/>
</dbReference>
<dbReference type="SUPFAM" id="SSF54373">
    <property type="entry name" value="FAD-linked reductases, C-terminal domain"/>
    <property type="match status" value="1"/>
</dbReference>
<dbReference type="SUPFAM" id="SSF51905">
    <property type="entry name" value="FAD/NAD(P)-binding domain"/>
    <property type="match status" value="1"/>
</dbReference>
<dbReference type="PROSITE" id="PS00624">
    <property type="entry name" value="GMC_OXRED_2"/>
    <property type="match status" value="1"/>
</dbReference>
<proteinExistence type="evidence at protein level"/>
<evidence type="ECO:0000250" key="1"/>
<evidence type="ECO:0000250" key="2">
    <source>
        <dbReference type="UniProtKB" id="E4QP00"/>
    </source>
</evidence>
<evidence type="ECO:0000255" key="3"/>
<evidence type="ECO:0000269" key="4">
    <source>
    </source>
</evidence>
<evidence type="ECO:0000269" key="5">
    <source>
    </source>
</evidence>
<evidence type="ECO:0000269" key="6">
    <source ref="1"/>
</evidence>
<evidence type="ECO:0000305" key="7"/>